<reference key="1">
    <citation type="journal article" date="1988" name="Genes Dev.">
        <title>The Drosophila su(Hw) gene, which controls the phenotypic effect of the gypsy transposable element, encodes a putative DNA-binding protein.</title>
        <authorList>
            <person name="Parkhurst S.M."/>
            <person name="Harrison D.A."/>
            <person name="Remington M.P."/>
            <person name="Spana C."/>
            <person name="Kelley R.L."/>
            <person name="Coyne R.S."/>
            <person name="Corces V.G."/>
        </authorList>
    </citation>
    <scope>NUCLEOTIDE SEQUENCE [GENOMIC DNA]</scope>
    <scope>FUNCTION</scope>
    <scope>DEVELOPMENTAL STAGE</scope>
    <source>
        <strain>Canton-S</strain>
    </source>
</reference>
<reference key="2">
    <citation type="journal article" date="2000" name="Science">
        <title>The genome sequence of Drosophila melanogaster.</title>
        <authorList>
            <person name="Adams M.D."/>
            <person name="Celniker S.E."/>
            <person name="Holt R.A."/>
            <person name="Evans C.A."/>
            <person name="Gocayne J.D."/>
            <person name="Amanatides P.G."/>
            <person name="Scherer S.E."/>
            <person name="Li P.W."/>
            <person name="Hoskins R.A."/>
            <person name="Galle R.F."/>
            <person name="George R.A."/>
            <person name="Lewis S.E."/>
            <person name="Richards S."/>
            <person name="Ashburner M."/>
            <person name="Henderson S.N."/>
            <person name="Sutton G.G."/>
            <person name="Wortman J.R."/>
            <person name="Yandell M.D."/>
            <person name="Zhang Q."/>
            <person name="Chen L.X."/>
            <person name="Brandon R.C."/>
            <person name="Rogers Y.-H.C."/>
            <person name="Blazej R.G."/>
            <person name="Champe M."/>
            <person name="Pfeiffer B.D."/>
            <person name="Wan K.H."/>
            <person name="Doyle C."/>
            <person name="Baxter E.G."/>
            <person name="Helt G."/>
            <person name="Nelson C.R."/>
            <person name="Miklos G.L.G."/>
            <person name="Abril J.F."/>
            <person name="Agbayani A."/>
            <person name="An H.-J."/>
            <person name="Andrews-Pfannkoch C."/>
            <person name="Baldwin D."/>
            <person name="Ballew R.M."/>
            <person name="Basu A."/>
            <person name="Baxendale J."/>
            <person name="Bayraktaroglu L."/>
            <person name="Beasley E.M."/>
            <person name="Beeson K.Y."/>
            <person name="Benos P.V."/>
            <person name="Berman B.P."/>
            <person name="Bhandari D."/>
            <person name="Bolshakov S."/>
            <person name="Borkova D."/>
            <person name="Botchan M.R."/>
            <person name="Bouck J."/>
            <person name="Brokstein P."/>
            <person name="Brottier P."/>
            <person name="Burtis K.C."/>
            <person name="Busam D.A."/>
            <person name="Butler H."/>
            <person name="Cadieu E."/>
            <person name="Center A."/>
            <person name="Chandra I."/>
            <person name="Cherry J.M."/>
            <person name="Cawley S."/>
            <person name="Dahlke C."/>
            <person name="Davenport L.B."/>
            <person name="Davies P."/>
            <person name="de Pablos B."/>
            <person name="Delcher A."/>
            <person name="Deng Z."/>
            <person name="Mays A.D."/>
            <person name="Dew I."/>
            <person name="Dietz S.M."/>
            <person name="Dodson K."/>
            <person name="Doup L.E."/>
            <person name="Downes M."/>
            <person name="Dugan-Rocha S."/>
            <person name="Dunkov B.C."/>
            <person name="Dunn P."/>
            <person name="Durbin K.J."/>
            <person name="Evangelista C.C."/>
            <person name="Ferraz C."/>
            <person name="Ferriera S."/>
            <person name="Fleischmann W."/>
            <person name="Fosler C."/>
            <person name="Gabrielian A.E."/>
            <person name="Garg N.S."/>
            <person name="Gelbart W.M."/>
            <person name="Glasser K."/>
            <person name="Glodek A."/>
            <person name="Gong F."/>
            <person name="Gorrell J.H."/>
            <person name="Gu Z."/>
            <person name="Guan P."/>
            <person name="Harris M."/>
            <person name="Harris N.L."/>
            <person name="Harvey D.A."/>
            <person name="Heiman T.J."/>
            <person name="Hernandez J.R."/>
            <person name="Houck J."/>
            <person name="Hostin D."/>
            <person name="Houston K.A."/>
            <person name="Howland T.J."/>
            <person name="Wei M.-H."/>
            <person name="Ibegwam C."/>
            <person name="Jalali M."/>
            <person name="Kalush F."/>
            <person name="Karpen G.H."/>
            <person name="Ke Z."/>
            <person name="Kennison J.A."/>
            <person name="Ketchum K.A."/>
            <person name="Kimmel B.E."/>
            <person name="Kodira C.D."/>
            <person name="Kraft C.L."/>
            <person name="Kravitz S."/>
            <person name="Kulp D."/>
            <person name="Lai Z."/>
            <person name="Lasko P."/>
            <person name="Lei Y."/>
            <person name="Levitsky A.A."/>
            <person name="Li J.H."/>
            <person name="Li Z."/>
            <person name="Liang Y."/>
            <person name="Lin X."/>
            <person name="Liu X."/>
            <person name="Mattei B."/>
            <person name="McIntosh T.C."/>
            <person name="McLeod M.P."/>
            <person name="McPherson D."/>
            <person name="Merkulov G."/>
            <person name="Milshina N.V."/>
            <person name="Mobarry C."/>
            <person name="Morris J."/>
            <person name="Moshrefi A."/>
            <person name="Mount S.M."/>
            <person name="Moy M."/>
            <person name="Murphy B."/>
            <person name="Murphy L."/>
            <person name="Muzny D.M."/>
            <person name="Nelson D.L."/>
            <person name="Nelson D.R."/>
            <person name="Nelson K.A."/>
            <person name="Nixon K."/>
            <person name="Nusskern D.R."/>
            <person name="Pacleb J.M."/>
            <person name="Palazzolo M."/>
            <person name="Pittman G.S."/>
            <person name="Pan S."/>
            <person name="Pollard J."/>
            <person name="Puri V."/>
            <person name="Reese M.G."/>
            <person name="Reinert K."/>
            <person name="Remington K."/>
            <person name="Saunders R.D.C."/>
            <person name="Scheeler F."/>
            <person name="Shen H."/>
            <person name="Shue B.C."/>
            <person name="Siden-Kiamos I."/>
            <person name="Simpson M."/>
            <person name="Skupski M.P."/>
            <person name="Smith T.J."/>
            <person name="Spier E."/>
            <person name="Spradling A.C."/>
            <person name="Stapleton M."/>
            <person name="Strong R."/>
            <person name="Sun E."/>
            <person name="Svirskas R."/>
            <person name="Tector C."/>
            <person name="Turner R."/>
            <person name="Venter E."/>
            <person name="Wang A.H."/>
            <person name="Wang X."/>
            <person name="Wang Z.-Y."/>
            <person name="Wassarman D.A."/>
            <person name="Weinstock G.M."/>
            <person name="Weissenbach J."/>
            <person name="Williams S.M."/>
            <person name="Woodage T."/>
            <person name="Worley K.C."/>
            <person name="Wu D."/>
            <person name="Yang S."/>
            <person name="Yao Q.A."/>
            <person name="Ye J."/>
            <person name="Yeh R.-F."/>
            <person name="Zaveri J.S."/>
            <person name="Zhan M."/>
            <person name="Zhang G."/>
            <person name="Zhao Q."/>
            <person name="Zheng L."/>
            <person name="Zheng X.H."/>
            <person name="Zhong F.N."/>
            <person name="Zhong W."/>
            <person name="Zhou X."/>
            <person name="Zhu S.C."/>
            <person name="Zhu X."/>
            <person name="Smith H.O."/>
            <person name="Gibbs R.A."/>
            <person name="Myers E.W."/>
            <person name="Rubin G.M."/>
            <person name="Venter J.C."/>
        </authorList>
    </citation>
    <scope>NUCLEOTIDE SEQUENCE [LARGE SCALE GENOMIC DNA]</scope>
    <source>
        <strain>Berkeley</strain>
    </source>
</reference>
<reference key="3">
    <citation type="journal article" date="2002" name="Genome Biol.">
        <title>Annotation of the Drosophila melanogaster euchromatic genome: a systematic review.</title>
        <authorList>
            <person name="Misra S."/>
            <person name="Crosby M.A."/>
            <person name="Mungall C.J."/>
            <person name="Matthews B.B."/>
            <person name="Campbell K.S."/>
            <person name="Hradecky P."/>
            <person name="Huang Y."/>
            <person name="Kaminker J.S."/>
            <person name="Millburn G.H."/>
            <person name="Prochnik S.E."/>
            <person name="Smith C.D."/>
            <person name="Tupy J.L."/>
            <person name="Whitfield E.J."/>
            <person name="Bayraktaroglu L."/>
            <person name="Berman B.P."/>
            <person name="Bettencourt B.R."/>
            <person name="Celniker S.E."/>
            <person name="de Grey A.D.N.J."/>
            <person name="Drysdale R.A."/>
            <person name="Harris N.L."/>
            <person name="Richter J."/>
            <person name="Russo S."/>
            <person name="Schroeder A.J."/>
            <person name="Shu S.Q."/>
            <person name="Stapleton M."/>
            <person name="Yamada C."/>
            <person name="Ashburner M."/>
            <person name="Gelbart W.M."/>
            <person name="Rubin G.M."/>
            <person name="Lewis S.E."/>
        </authorList>
    </citation>
    <scope>GENOME REANNOTATION</scope>
    <source>
        <strain>Berkeley</strain>
    </source>
</reference>
<reference key="4">
    <citation type="journal article" date="2002" name="Genome Biol.">
        <title>A Drosophila full-length cDNA resource.</title>
        <authorList>
            <person name="Stapleton M."/>
            <person name="Carlson J.W."/>
            <person name="Brokstein P."/>
            <person name="Yu C."/>
            <person name="Champe M."/>
            <person name="George R.A."/>
            <person name="Guarin H."/>
            <person name="Kronmiller B."/>
            <person name="Pacleb J.M."/>
            <person name="Park S."/>
            <person name="Wan K.H."/>
            <person name="Rubin G.M."/>
            <person name="Celniker S.E."/>
        </authorList>
    </citation>
    <scope>NUCLEOTIDE SEQUENCE [LARGE SCALE MRNA]</scope>
    <source>
        <strain>Berkeley</strain>
        <tissue>Embryo</tissue>
    </source>
</reference>
<reference key="5">
    <citation type="journal article" date="1993" name="EMBO J.">
        <title>The su(Hw) protein insulates expression of the Drosophila melanogaster white gene from chromosomal position-effects.</title>
        <authorList>
            <person name="Roseman R.R."/>
            <person name="Pirrotta V."/>
            <person name="Gelyer P.K."/>
        </authorList>
    </citation>
    <scope>FUNCTION</scope>
    <scope>SUBCELLULAR LOCATION</scope>
</reference>
<reference key="6">
    <citation type="journal article" date="1993" name="Genes Dev.">
        <title>A leucine zipper domain of the suppressor of Hairy-wing protein mediates its repressive effect on enhancer function.</title>
        <authorList>
            <person name="Harrison D.A."/>
            <person name="Gdula D.A."/>
            <person name="Coyne R.S."/>
            <person name="Corces V.G."/>
        </authorList>
    </citation>
    <scope>FUNCTION</scope>
</reference>
<reference key="7">
    <citation type="journal article" date="1995" name="Cell">
        <title>A Drosophila protein that imparts directionality on a chromatin insulator is an enhancer of position-effect variegation.</title>
        <authorList>
            <person name="Gerasimova T.I."/>
            <person name="Gdula D.A."/>
            <person name="Gerasimov D.V."/>
            <person name="Simonova O."/>
            <person name="Corces V.G."/>
        </authorList>
    </citation>
    <scope>FUNCTION</scope>
    <scope>INTERACTION WITH MOD(MDG4)</scope>
</reference>
<reference key="8">
    <citation type="journal article" date="1995" name="Proc. Natl. Acad. Sci. U.S.A.">
        <title>The su(Hw) protein bound to gypsy sequences in one chromosome can repress enhancer-promoter interactions in the paired gene located in the other homolog.</title>
        <authorList>
            <person name="Georgiev P.G."/>
            <person name="Corces V.G."/>
        </authorList>
    </citation>
    <scope>FUNCTION</scope>
</reference>
<reference key="9">
    <citation type="journal article" date="1996" name="Genetics">
        <title>Interaction between mutations in the suppressor of Hairy wing and modifier of mdg4 genes of Drosophila melanogaster affecting the phenotype of gypsy-induced mutations.</title>
        <authorList>
            <person name="Georgiev P.G."/>
            <person name="Kozycina M."/>
        </authorList>
    </citation>
    <scope>FUNCTION</scope>
</reference>
<reference key="10">
    <citation type="journal article" date="1997" name="Genetics">
        <title>Characterization of functional domains of the su(Hw) protein that mediate the silencing effect of mod(mdg4) mutations.</title>
        <authorList>
            <person name="Gdula D.A."/>
            <person name="Corces V.G."/>
        </authorList>
    </citation>
    <scope>FUNCTION</scope>
</reference>
<reference key="11">
    <citation type="journal article" date="1998" name="Cell">
        <title>Polycomb and trithorax group proteins mediate the function of a chromatin insulator.</title>
        <authorList>
            <person name="Gerasimova T.I."/>
            <person name="Corces V.G."/>
        </authorList>
    </citation>
    <scope>SUBCELLULAR LOCATION</scope>
</reference>
<reference key="12">
    <citation type="journal article" date="2000" name="Mol. Cell">
        <title>A chromatin insulator determines the nuclear localization of DNA.</title>
        <authorList>
            <person name="Gerasimova T.I."/>
            <person name="Byrd K."/>
            <person name="Corces V.G."/>
        </authorList>
    </citation>
    <scope>SUBCELLULAR LOCATION</scope>
</reference>
<reference key="13">
    <citation type="journal article" date="2001" name="EMBO J.">
        <title>Interactions between the Su(Hw) and Mod(mdg4) proteins required for gypsy insulator function.</title>
        <authorList>
            <person name="Ghosh D."/>
            <person name="Gerasimova T.I."/>
            <person name="Corces V.G."/>
        </authorList>
    </citation>
    <scope>INTERACTION WITH MOD(MDG4)</scope>
    <scope>SUBCELLULAR LOCATION</scope>
</reference>
<reference key="14">
    <citation type="journal article" date="2001" name="Genetics">
        <title>The gypsy insulator of Drosophila affects chromatin structure in a directional manner.</title>
        <authorList>
            <person name="Chen S."/>
            <person name="Corces V.G."/>
        </authorList>
    </citation>
    <scope>FUNCTION</scope>
</reference>
<reference key="15">
    <citation type="journal article" date="2001" name="Mol. Cell. Biol.">
        <title>Insulation of enhancer-promoter communication by a gypsy transposon insert in the Drosophila cut gene: cooperation between suppressor of hairy-wing and modifier of mdg4 proteins.</title>
        <authorList>
            <person name="Gause M."/>
            <person name="Morcillo P."/>
            <person name="Dorsett D."/>
        </authorList>
    </citation>
    <scope>INTERACTION WITH MOD(MDG4)</scope>
</reference>
<reference key="16">
    <citation type="journal article" date="2004" name="J. Cell Sci.">
        <title>Nuclear location of a chromatin insulator in Drosophila melanogaster.</title>
        <authorList>
            <person name="Xu Q."/>
            <person name="Li M."/>
            <person name="Adams J."/>
            <person name="Cai H.N."/>
        </authorList>
    </citation>
    <scope>SUBCELLULAR LOCATION</scope>
</reference>
<reference key="17">
    <citation type="journal article" date="2004" name="Mol. Cell">
        <title>The centrosomal protein CP190 is a component of the gypsy chromatin insulator.</title>
        <authorList>
            <person name="Pai C.-Y."/>
            <person name="Lei E.P."/>
            <person name="Ghosh D."/>
            <person name="Corces V.G."/>
        </authorList>
    </citation>
    <scope>INTERACTION WITH CP190 AND MOD(MDG4)</scope>
    <scope>SUBCELLULAR LOCATION</scope>
</reference>
<reference key="18">
    <citation type="journal article" date="2005" name="Mol. Cell">
        <title>The ubiquitin ligase dTopors directs the nuclear organization of a chromatin insulator.</title>
        <authorList>
            <person name="Capelson M."/>
            <person name="Corces V.G."/>
        </authorList>
    </citation>
    <scope>INTERACTION WITH TOPORS</scope>
    <scope>SUBCELLULAR LOCATION</scope>
</reference>
<reference key="19">
    <citation type="journal article" date="2008" name="J. Proteome Res.">
        <title>Phosphoproteome analysis of Drosophila melanogaster embryos.</title>
        <authorList>
            <person name="Zhai B."/>
            <person name="Villen J."/>
            <person name="Beausoleil S.A."/>
            <person name="Mintseris J."/>
            <person name="Gygi S.P."/>
        </authorList>
    </citation>
    <scope>PHOSPHORYLATION [LARGE SCALE ANALYSIS] AT THR-186</scope>
    <scope>IDENTIFICATION BY MASS SPECTROMETRY</scope>
    <source>
        <tissue>Embryo</tissue>
    </source>
</reference>
<reference key="20">
    <citation type="journal article" date="2017" name="Mol. Cell">
        <title>Metazoan nuclear pores provide a scaffold for poised genes and mediate induced enhancer-promoter contacts.</title>
        <authorList>
            <person name="Pascual-Garcia P."/>
            <person name="Debo B."/>
            <person name="Aleman J.R."/>
            <person name="Talamas J.A."/>
            <person name="Lan Y."/>
            <person name="Nguyen N.H."/>
            <person name="Won K.J."/>
            <person name="Capelson M."/>
        </authorList>
    </citation>
    <scope>INTERACTION WITH NUP98</scope>
</reference>
<reference key="21">
    <citation type="journal article" date="2024" name="Nucleic Acids Res.">
        <title>New Drosophila promoter-associated architectural protein Mzfp1 interacts with CP190 and is required for housekeeping gene expression and insulator activity.</title>
        <authorList>
            <person name="Sokolov V."/>
            <person name="Kyrchanova O."/>
            <person name="Klimenko N."/>
            <person name="Fedotova A."/>
            <person name="Ibragimov A."/>
            <person name="Maksimenko O."/>
            <person name="Georgiev P."/>
        </authorList>
    </citation>
    <scope>FUNCTION</scope>
</reference>
<protein>
    <recommendedName>
        <fullName evidence="18">Zinc finger protein su(Hw)</fullName>
    </recommendedName>
    <alternativeName>
        <fullName evidence="19">Protein suppressor of hairy wing</fullName>
    </alternativeName>
</protein>
<gene>
    <name evidence="19" type="primary">su(Hw)</name>
    <name evidence="19" type="ORF">CG8573</name>
</gene>
<feature type="chain" id="PRO_0000047053" description="Zinc finger protein su(Hw)">
    <location>
        <begin position="1"/>
        <end position="941"/>
    </location>
</feature>
<feature type="zinc finger region" description="C2H2-type 1; atypical" evidence="1">
    <location>
        <begin position="220"/>
        <end position="242"/>
    </location>
</feature>
<feature type="zinc finger region" description="C2H2-type 2" evidence="1">
    <location>
        <begin position="290"/>
        <end position="313"/>
    </location>
</feature>
<feature type="zinc finger region" description="C2H2-type 3; atypical" evidence="1">
    <location>
        <begin position="319"/>
        <end position="341"/>
    </location>
</feature>
<feature type="zinc finger region" description="C2H2-type 4" evidence="1">
    <location>
        <begin position="348"/>
        <end position="366"/>
    </location>
</feature>
<feature type="zinc finger region" description="C2H2-type 5" evidence="1">
    <location>
        <begin position="380"/>
        <end position="402"/>
    </location>
</feature>
<feature type="zinc finger region" description="C2H2-type 6" evidence="1">
    <location>
        <begin position="413"/>
        <end position="435"/>
    </location>
</feature>
<feature type="zinc finger region" description="C2H2-type 7" evidence="1">
    <location>
        <begin position="441"/>
        <end position="463"/>
    </location>
</feature>
<feature type="zinc finger region" description="C2H2-type 8" evidence="1">
    <location>
        <begin position="469"/>
        <end position="491"/>
    </location>
</feature>
<feature type="zinc finger region" description="C2H2-type 9" evidence="1">
    <location>
        <begin position="497"/>
        <end position="519"/>
    </location>
</feature>
<feature type="zinc finger region" description="C2H2-type 10" evidence="1">
    <location>
        <begin position="523"/>
        <end position="545"/>
    </location>
</feature>
<feature type="zinc finger region" description="C2H2-type 11" evidence="1">
    <location>
        <begin position="553"/>
        <end position="577"/>
    </location>
</feature>
<feature type="zinc finger region" description="C2H2-type 12" evidence="1">
    <location>
        <begin position="596"/>
        <end position="619"/>
    </location>
</feature>
<feature type="region of interest" description="Disordered" evidence="2">
    <location>
        <begin position="1"/>
        <end position="97"/>
    </location>
</feature>
<feature type="region of interest" description="Disordered" evidence="2">
    <location>
        <begin position="176"/>
        <end position="211"/>
    </location>
</feature>
<feature type="region of interest" description="Interaction with mod(mdg4)">
    <location>
        <begin position="760"/>
        <end position="860"/>
    </location>
</feature>
<feature type="region of interest" description="Disordered" evidence="2">
    <location>
        <begin position="864"/>
        <end position="941"/>
    </location>
</feature>
<feature type="compositionally biased region" description="Low complexity" evidence="2">
    <location>
        <begin position="47"/>
        <end position="57"/>
    </location>
</feature>
<feature type="compositionally biased region" description="Acidic residues" evidence="2">
    <location>
        <begin position="185"/>
        <end position="202"/>
    </location>
</feature>
<feature type="compositionally biased region" description="Basic and acidic residues" evidence="2">
    <location>
        <begin position="869"/>
        <end position="880"/>
    </location>
</feature>
<feature type="compositionally biased region" description="Basic and acidic residues" evidence="2">
    <location>
        <begin position="891"/>
        <end position="941"/>
    </location>
</feature>
<feature type="modified residue" description="Phosphothreonine" evidence="8">
    <location>
        <position position="186"/>
    </location>
</feature>
<feature type="sequence conflict" description="In Ref. 1; CAA68371." evidence="18" ref="1">
    <original>R</original>
    <variation>K</variation>
    <location>
        <position position="31"/>
    </location>
</feature>
<feature type="sequence conflict" description="In Ref. 1; CAA68371." evidence="18" ref="1">
    <original>E</original>
    <variation>G</variation>
    <location>
        <position position="61"/>
    </location>
</feature>
<feature type="sequence conflict" description="In Ref. 1; CAA68371." evidence="18" ref="1">
    <original>G</original>
    <variation>D</variation>
    <location>
        <position position="64"/>
    </location>
</feature>
<feature type="sequence conflict" description="In Ref. 1; CAA68371." evidence="18" ref="1">
    <original>G</original>
    <variation>E</variation>
    <location>
        <position position="68"/>
    </location>
</feature>
<feature type="sequence conflict" description="In Ref. 1; CAA68371." evidence="18" ref="1">
    <original>H</original>
    <variation>R</variation>
    <location>
        <position position="249"/>
    </location>
</feature>
<feature type="sequence conflict" description="In Ref. 1; CAA68371." evidence="18" ref="1">
    <original>P</original>
    <variation>S</variation>
    <location>
        <position position="347"/>
    </location>
</feature>
<feature type="sequence conflict" description="In Ref. 1; CAA68371." evidence="18" ref="1">
    <original>Q</original>
    <variation>R</variation>
    <location>
        <position position="508"/>
    </location>
</feature>
<feature type="sequence conflict" description="In Ref. 1; CAA68371." evidence="18" ref="1">
    <original>G</original>
    <variation>D</variation>
    <location>
        <position position="667"/>
    </location>
</feature>
<feature type="sequence conflict" description="In Ref. 1; CAA68371." evidence="18" ref="1">
    <original>N</original>
    <variation>NEDN</variation>
    <location>
        <position position="874"/>
    </location>
</feature>
<feature type="sequence conflict" description="In Ref. 1; CAA68371." evidence="18" ref="1">
    <original>T</original>
    <variation>K</variation>
    <location>
        <position position="892"/>
    </location>
</feature>
<feature type="sequence conflict" description="In Ref. 1; CAA68371." evidence="18" ref="1">
    <original>R</original>
    <variation>K</variation>
    <location>
        <position position="896"/>
    </location>
</feature>
<feature type="sequence conflict" description="In Ref. 1; CAA68371." evidence="18" ref="1">
    <original>S</original>
    <variation>T</variation>
    <location>
        <position position="923"/>
    </location>
</feature>
<name>SUHW_DROME</name>
<evidence type="ECO:0000255" key="1">
    <source>
        <dbReference type="PROSITE-ProRule" id="PRU00042"/>
    </source>
</evidence>
<evidence type="ECO:0000256" key="2">
    <source>
        <dbReference type="SAM" id="MobiDB-lite"/>
    </source>
</evidence>
<evidence type="ECO:0000269" key="3">
    <source>
    </source>
</evidence>
<evidence type="ECO:0000269" key="4">
    <source>
    </source>
</evidence>
<evidence type="ECO:0000269" key="5">
    <source>
    </source>
</evidence>
<evidence type="ECO:0000269" key="6">
    <source>
    </source>
</evidence>
<evidence type="ECO:0000269" key="7">
    <source>
    </source>
</evidence>
<evidence type="ECO:0000269" key="8">
    <source>
    </source>
</evidence>
<evidence type="ECO:0000269" key="9">
    <source>
    </source>
</evidence>
<evidence type="ECO:0000269" key="10">
    <source>
    </source>
</evidence>
<evidence type="ECO:0000269" key="11">
    <source>
    </source>
</evidence>
<evidence type="ECO:0000269" key="12">
    <source>
    </source>
</evidence>
<evidence type="ECO:0000269" key="13">
    <source>
    </source>
</evidence>
<evidence type="ECO:0000269" key="14">
    <source>
    </source>
</evidence>
<evidence type="ECO:0000269" key="15">
    <source>
    </source>
</evidence>
<evidence type="ECO:0000269" key="16">
    <source>
    </source>
</evidence>
<evidence type="ECO:0000269" key="17">
    <source>
    </source>
</evidence>
<evidence type="ECO:0000305" key="18"/>
<evidence type="ECO:0000312" key="19">
    <source>
        <dbReference type="FlyBase" id="FBgn0003567"/>
    </source>
</evidence>
<evidence type="ECO:0000312" key="20">
    <source>
        <dbReference type="Proteomes" id="UP000000803"/>
    </source>
</evidence>
<comment type="function">
    <text evidence="5 9 11 12 13 14 15 16 17">Component of the gypsy chromatin insulator complex which is required for the function of the gypsy chromatin insulator and other endogenous chromatin insulators. Chromatin insulators are regulatory elements which establish independent domains of transcriptional activity within eukaryotic genomes. Insulators have two defining properties; they can block the communication between an enhancer and a promoter when placed between them and can also buffer transgenes from position effect variegation (PEV). Insulators are proposed to structure the chromatin fiber into independent domains of differing transcriptional potential by promoting the formation of distinct chromatin loops. This chromatin looping may involve the formation of insulator bodies, where homotypic interactions between individual subunits of the insulator complex could promote the clustering of widely spaced insulators at the nuclear periphery. Within the gypsy insulator complex, this protein binds specifically to a region of the gypsy element located 3' of the 5' long terminal repeat (LTR), and may also mediate interaction with other endogenous insulators at sites distinct from those recognized by Cp190. Cooperates with pita and cliff to recruit Cp190 and regulate insulator function at the front-ultraabdominal (Fub) boundary (PubMed:38769058).</text>
</comment>
<comment type="subunit">
    <text evidence="3 4 6 7 10 12">Component of the gypsy chromatin insulator complex, composed of Cp190, mod(mdg4) and su(Hw) (PubMed:11350941, PubMed:11416154, PubMed:15574329, PubMed:7664338). The gypsy chromatin insulator complex interacts with Topors via mod(mdg4) and su(Hw) (PubMed:16209949). Upon ecdysone stimulation, interacts with Nup98 (PubMed:28366641).</text>
</comment>
<comment type="interaction">
    <interactant intactId="EBI-101373">
        <id>P08970</id>
    </interactant>
    <interactant intactId="EBI-868840">
        <id>Q24478</id>
        <label>Cp190</label>
    </interactant>
    <organismsDiffer>false</organismsDiffer>
    <experiments>12</experiments>
</comment>
<comment type="subcellular location">
    <subcellularLocation>
        <location>Nucleus</location>
    </subcellularLocation>
    <subcellularLocation>
        <location>Chromosome</location>
    </subcellularLocation>
    <text>Colocalizes with other elements of the gypsy chromatin insulator complex at multiple sites on polytene chromosomes and at nuclear insulator bodies.</text>
</comment>
<comment type="developmental stage">
    <text evidence="9">Expressed in all stages of development.</text>
</comment>
<proteinExistence type="evidence at protein level"/>
<keyword id="KW-0156">Chromatin regulator</keyword>
<keyword id="KW-0158">Chromosome</keyword>
<keyword id="KW-0238">DNA-binding</keyword>
<keyword id="KW-0479">Metal-binding</keyword>
<keyword id="KW-0539">Nucleus</keyword>
<keyword id="KW-0597">Phosphoprotein</keyword>
<keyword id="KW-1185">Reference proteome</keyword>
<keyword id="KW-0677">Repeat</keyword>
<keyword id="KW-0804">Transcription</keyword>
<keyword id="KW-0805">Transcription regulation</keyword>
<keyword id="KW-0862">Zinc</keyword>
<keyword id="KW-0863">Zinc-finger</keyword>
<dbReference type="EMBL" id="Y00228">
    <property type="protein sequence ID" value="CAA68371.1"/>
    <property type="molecule type" value="Genomic_DNA"/>
</dbReference>
<dbReference type="EMBL" id="AE014297">
    <property type="protein sequence ID" value="AAF55044.1"/>
    <property type="molecule type" value="Genomic_DNA"/>
</dbReference>
<dbReference type="EMBL" id="BT003273">
    <property type="protein sequence ID" value="AAO25030.1"/>
    <property type="molecule type" value="mRNA"/>
</dbReference>
<dbReference type="PIR" id="S01909">
    <property type="entry name" value="S01909"/>
</dbReference>
<dbReference type="RefSeq" id="NP_001247098.1">
    <property type="nucleotide sequence ID" value="NM_001260169.2"/>
</dbReference>
<dbReference type="RefSeq" id="NP_524349.1">
    <property type="nucleotide sequence ID" value="NM_079625.3"/>
</dbReference>
<dbReference type="RefSeq" id="NP_731897.1">
    <property type="nucleotide sequence ID" value="NM_169574.2"/>
</dbReference>
<dbReference type="SMR" id="P08970"/>
<dbReference type="BioGRID" id="66816">
    <property type="interactions" value="55"/>
</dbReference>
<dbReference type="DIP" id="DIP-17895N"/>
<dbReference type="FunCoup" id="P08970">
    <property type="interactions" value="518"/>
</dbReference>
<dbReference type="IntAct" id="P08970">
    <property type="interactions" value="21"/>
</dbReference>
<dbReference type="MINT" id="P08970"/>
<dbReference type="STRING" id="7227.FBpp0301708"/>
<dbReference type="iPTMnet" id="P08970"/>
<dbReference type="PaxDb" id="7227-FBpp0082404"/>
<dbReference type="DNASU" id="41740"/>
<dbReference type="EnsemblMetazoa" id="FBtr0082945">
    <property type="protein sequence ID" value="FBpp0082404"/>
    <property type="gene ID" value="FBgn0003567"/>
</dbReference>
<dbReference type="EnsemblMetazoa" id="FBtr0082946">
    <property type="protein sequence ID" value="FBpp0082405"/>
    <property type="gene ID" value="FBgn0003567"/>
</dbReference>
<dbReference type="EnsemblMetazoa" id="FBtr0310002">
    <property type="protein sequence ID" value="FBpp0301708"/>
    <property type="gene ID" value="FBgn0003567"/>
</dbReference>
<dbReference type="GeneID" id="41740"/>
<dbReference type="KEGG" id="dme:Dmel_CG8573"/>
<dbReference type="AGR" id="FB:FBgn0003567"/>
<dbReference type="CTD" id="41740"/>
<dbReference type="FlyBase" id="FBgn0003567">
    <property type="gene designation" value="su(Hw)"/>
</dbReference>
<dbReference type="VEuPathDB" id="VectorBase:FBgn0003567"/>
<dbReference type="eggNOG" id="KOG1721">
    <property type="taxonomic scope" value="Eukaryota"/>
</dbReference>
<dbReference type="GeneTree" id="ENSGT00940000166978"/>
<dbReference type="HOGENOM" id="CLU_013489_0_0_1"/>
<dbReference type="InParanoid" id="P08970"/>
<dbReference type="OMA" id="KMDHYVL"/>
<dbReference type="OrthoDB" id="654211at2759"/>
<dbReference type="PhylomeDB" id="P08970"/>
<dbReference type="SignaLink" id="P08970"/>
<dbReference type="BioGRID-ORCS" id="41740">
    <property type="hits" value="0 hits in 1 CRISPR screen"/>
</dbReference>
<dbReference type="CD-CODE" id="5A480847">
    <property type="entry name" value="Insulator body"/>
</dbReference>
<dbReference type="ChiTaRS" id="su(Hw)">
    <property type="organism name" value="fly"/>
</dbReference>
<dbReference type="GenomeRNAi" id="41740"/>
<dbReference type="PRO" id="PR:P08970"/>
<dbReference type="Proteomes" id="UP000000803">
    <property type="component" value="Chromosome 3R"/>
</dbReference>
<dbReference type="Bgee" id="FBgn0003567">
    <property type="expression patterns" value="Expressed in nurse follicle cell (Drosophila) in ovary and 186 other cell types or tissues"/>
</dbReference>
<dbReference type="ExpressionAtlas" id="P08970">
    <property type="expression patterns" value="baseline and differential"/>
</dbReference>
<dbReference type="GO" id="GO:0000785">
    <property type="term" value="C:chromatin"/>
    <property type="evidence" value="ECO:0000314"/>
    <property type="project" value="FlyBase"/>
</dbReference>
<dbReference type="GO" id="GO:0005634">
    <property type="term" value="C:nucleus"/>
    <property type="evidence" value="ECO:0000314"/>
    <property type="project" value="UniProtKB"/>
</dbReference>
<dbReference type="GO" id="GO:0003682">
    <property type="term" value="F:chromatin binding"/>
    <property type="evidence" value="ECO:0000314"/>
    <property type="project" value="FlyBase"/>
</dbReference>
<dbReference type="GO" id="GO:0043035">
    <property type="term" value="F:chromatin insulator sequence binding"/>
    <property type="evidence" value="ECO:0000314"/>
    <property type="project" value="UniProtKB"/>
</dbReference>
<dbReference type="GO" id="GO:0003677">
    <property type="term" value="F:DNA binding"/>
    <property type="evidence" value="ECO:0000314"/>
    <property type="project" value="FlyBase"/>
</dbReference>
<dbReference type="GO" id="GO:0003700">
    <property type="term" value="F:DNA-binding transcription factor activity"/>
    <property type="evidence" value="ECO:0000318"/>
    <property type="project" value="GO_Central"/>
</dbReference>
<dbReference type="GO" id="GO:1990188">
    <property type="term" value="F:euchromatin binding"/>
    <property type="evidence" value="ECO:0000314"/>
    <property type="project" value="FlyBase"/>
</dbReference>
<dbReference type="GO" id="GO:0000978">
    <property type="term" value="F:RNA polymerase II cis-regulatory region sequence-specific DNA binding"/>
    <property type="evidence" value="ECO:0000318"/>
    <property type="project" value="GO_Central"/>
</dbReference>
<dbReference type="GO" id="GO:0043565">
    <property type="term" value="F:sequence-specific DNA binding"/>
    <property type="evidence" value="ECO:0000314"/>
    <property type="project" value="FlyBase"/>
</dbReference>
<dbReference type="GO" id="GO:0008270">
    <property type="term" value="F:zinc ion binding"/>
    <property type="evidence" value="ECO:0007669"/>
    <property type="project" value="UniProtKB-KW"/>
</dbReference>
<dbReference type="GO" id="GO:0033696">
    <property type="term" value="P:heterochromatin boundary formation"/>
    <property type="evidence" value="ECO:0000315"/>
    <property type="project" value="FlyBase"/>
</dbReference>
<dbReference type="GO" id="GO:0045892">
    <property type="term" value="P:negative regulation of DNA-templated transcription"/>
    <property type="evidence" value="ECO:0000315"/>
    <property type="project" value="UniProtKB"/>
</dbReference>
<dbReference type="GO" id="GO:1905632">
    <property type="term" value="P:protein localization to euchromatin"/>
    <property type="evidence" value="ECO:0000315"/>
    <property type="project" value="FlyBase"/>
</dbReference>
<dbReference type="GO" id="GO:0006357">
    <property type="term" value="P:regulation of transcription by RNA polymerase II"/>
    <property type="evidence" value="ECO:0000318"/>
    <property type="project" value="GO_Central"/>
</dbReference>
<dbReference type="GO" id="GO:0035075">
    <property type="term" value="P:response to ecdysone"/>
    <property type="evidence" value="ECO:0000314"/>
    <property type="project" value="UniProtKB"/>
</dbReference>
<dbReference type="FunFam" id="3.30.160.60:FF:002689">
    <property type="entry name" value="Protein suppressor of hairy wing"/>
    <property type="match status" value="1"/>
</dbReference>
<dbReference type="FunFam" id="3.30.160.60:FF:000204">
    <property type="entry name" value="Zinc finger protein 331"/>
    <property type="match status" value="1"/>
</dbReference>
<dbReference type="FunFam" id="3.30.160.60:FF:000618">
    <property type="entry name" value="zinc finger protein 341 isoform X1"/>
    <property type="match status" value="1"/>
</dbReference>
<dbReference type="FunFam" id="3.30.160.60:FF:000690">
    <property type="entry name" value="Zinc finger protein 354C"/>
    <property type="match status" value="1"/>
</dbReference>
<dbReference type="FunFam" id="3.30.160.60:FF:000495">
    <property type="entry name" value="zinc finger protein 668"/>
    <property type="match status" value="1"/>
</dbReference>
<dbReference type="Gene3D" id="3.30.160.60">
    <property type="entry name" value="Classic Zinc Finger"/>
    <property type="match status" value="8"/>
</dbReference>
<dbReference type="InterPro" id="IPR050331">
    <property type="entry name" value="Zinc_finger"/>
</dbReference>
<dbReference type="InterPro" id="IPR036236">
    <property type="entry name" value="Znf_C2H2_sf"/>
</dbReference>
<dbReference type="InterPro" id="IPR013087">
    <property type="entry name" value="Znf_C2H2_type"/>
</dbReference>
<dbReference type="PANTHER" id="PTHR16515:SF66">
    <property type="entry name" value="C2H2-TYPE DOMAIN-CONTAINING PROTEIN"/>
    <property type="match status" value="1"/>
</dbReference>
<dbReference type="PANTHER" id="PTHR16515">
    <property type="entry name" value="PR DOMAIN ZINC FINGER PROTEIN"/>
    <property type="match status" value="1"/>
</dbReference>
<dbReference type="Pfam" id="PF00096">
    <property type="entry name" value="zf-C2H2"/>
    <property type="match status" value="8"/>
</dbReference>
<dbReference type="Pfam" id="PF13912">
    <property type="entry name" value="zf-C2H2_6"/>
    <property type="match status" value="1"/>
</dbReference>
<dbReference type="SMART" id="SM00355">
    <property type="entry name" value="ZnF_C2H2"/>
    <property type="match status" value="12"/>
</dbReference>
<dbReference type="SUPFAM" id="SSF57667">
    <property type="entry name" value="beta-beta-alpha zinc fingers"/>
    <property type="match status" value="5"/>
</dbReference>
<dbReference type="PROSITE" id="PS00028">
    <property type="entry name" value="ZINC_FINGER_C2H2_1"/>
    <property type="match status" value="10"/>
</dbReference>
<dbReference type="PROSITE" id="PS50157">
    <property type="entry name" value="ZINC_FINGER_C2H2_2"/>
    <property type="match status" value="10"/>
</dbReference>
<organism evidence="20">
    <name type="scientific">Drosophila melanogaster</name>
    <name type="common">Fruit fly</name>
    <dbReference type="NCBI Taxonomy" id="7227"/>
    <lineage>
        <taxon>Eukaryota</taxon>
        <taxon>Metazoa</taxon>
        <taxon>Ecdysozoa</taxon>
        <taxon>Arthropoda</taxon>
        <taxon>Hexapoda</taxon>
        <taxon>Insecta</taxon>
        <taxon>Pterygota</taxon>
        <taxon>Neoptera</taxon>
        <taxon>Endopterygota</taxon>
        <taxon>Diptera</taxon>
        <taxon>Brachycera</taxon>
        <taxon>Muscomorpha</taxon>
        <taxon>Ephydroidea</taxon>
        <taxon>Drosophilidae</taxon>
        <taxon>Drosophila</taxon>
        <taxon>Sophophora</taxon>
    </lineage>
</organism>
<accession>P08970</accession>
<accession>Q0KI74</accession>
<accession>Q9VFK9</accession>
<sequence>MSASKEGKEKKGKLLGVENISPPKDKRPATRMKLLNDVGAGEDSEASTTTTTSRTPSNKQEKRGSVAGSRIKILNEEILGTPKTEKRGATKSTAPAASTVKILNEKKTPSATVTAVETTKIKTSPSKRKKMEHYVLQAVKSENTKADTTVTVVTEEDDTIDFILADDEEVVPGRIENNNGQEIVVTEDDEDLGEDGDEDGEDSSGKGNSSQTKIKEIVEHVCGKCYKTFRRVQSLKKHLEFCRYDSGYHLRKADMLKNLEKIEKDAVVMEKKDICFCCSESYDTFHLGHINCPDCPKSFKTQTSYERHIFITHSEFSDFPCSICNANLRSEALLALHEEQHKSRGKPYACKICGKDFTRSYHLKRHQKYSSCSSNETDTMSCKVCDRVFYRLDNLRSHLKQHLGTQVVKKPEYMCHTCKNCFYSLSTLNIHIRTHTGEKPFDCDLCDKKFSALVALKKHRRYHTGEKPYSCTVCNQAFAVKEVLNRHMKRHTGERPHKCDECGKSFIQATQLRTHSKTHIRPFPCEQCDEKFKTEKQLERHVKTHSRTKRPVFSCAECKRNFRTPALLKEHMDEGKHSPKQQRSSMRSAVKIMERTDCAICDKNFDSSDTLRRHIRTVHECDPDDIFGVEPHPSKRAKKDIESEEVVPVALNTSAGSLISSQTDGNGVVVREFLVDEGDGAAQTITLENETYTILPLDGAIEGEQLTDEAGVKPEAKKEEAQVSPVVKKEQRKSLAASLAAAIADNLEESCSEDDFSGEILTEEDIKLKENVGKLIDMLVDPPILKKYGWPNAPEETVLCKVIENCGHDLTKGGENYAELDYGSRMREYCKLLFTVVIHNDSIKSLLNNFPIDDVIEYVLGDEDQDEGGLDKDNESHSGDEEAVSVTGETKTNEIREKPEKKEVSAKSEKKEIVGKAVDKDNSEEVVRENKKKPVGEQEKA</sequence>